<feature type="chain" id="PRO_1000124402" description="Diaminopimelate epimerase">
    <location>
        <begin position="1"/>
        <end position="303"/>
    </location>
</feature>
<feature type="region of interest" description="Disordered" evidence="2">
    <location>
        <begin position="278"/>
        <end position="303"/>
    </location>
</feature>
<feature type="active site" description="Proton donor" evidence="1">
    <location>
        <position position="76"/>
    </location>
</feature>
<feature type="active site" description="Proton acceptor" evidence="1">
    <location>
        <position position="224"/>
    </location>
</feature>
<feature type="binding site" evidence="1">
    <location>
        <position position="15"/>
    </location>
    <ligand>
        <name>substrate</name>
    </ligand>
</feature>
<feature type="binding site" evidence="1">
    <location>
        <position position="47"/>
    </location>
    <ligand>
        <name>substrate</name>
    </ligand>
</feature>
<feature type="binding site" evidence="1">
    <location>
        <position position="67"/>
    </location>
    <ligand>
        <name>substrate</name>
    </ligand>
</feature>
<feature type="binding site" evidence="1">
    <location>
        <begin position="77"/>
        <end position="78"/>
    </location>
    <ligand>
        <name>substrate</name>
    </ligand>
</feature>
<feature type="binding site" evidence="1">
    <location>
        <position position="163"/>
    </location>
    <ligand>
        <name>substrate</name>
    </ligand>
</feature>
<feature type="binding site" evidence="1">
    <location>
        <position position="197"/>
    </location>
    <ligand>
        <name>substrate</name>
    </ligand>
</feature>
<feature type="binding site" evidence="1">
    <location>
        <begin position="215"/>
        <end position="216"/>
    </location>
    <ligand>
        <name>substrate</name>
    </ligand>
</feature>
<feature type="binding site" evidence="1">
    <location>
        <begin position="225"/>
        <end position="226"/>
    </location>
    <ligand>
        <name>substrate</name>
    </ligand>
</feature>
<feature type="site" description="Could be important to modulate the pK values of the two catalytic cysteine residues" evidence="1">
    <location>
        <position position="165"/>
    </location>
</feature>
<feature type="site" description="Could be important to modulate the pK values of the two catalytic cysteine residues" evidence="1">
    <location>
        <position position="215"/>
    </location>
</feature>
<sequence length="303" mass="32310">MATKAAFARMNGLGNQIIVADMRGRADSITSAAAIRLASDSETAFDQIMAIHDPRTPGTDYYIAIINCDGTQAQACGNGTRCVVQALAAETGRHAFTFETRAGILTATEHDDGLISVDMGTPRFDWQDIPLAQAVADTRKIELQVGPADAPVLHSPSIASMGNPHAVFWVDKDVWSYELDKFGPLLENHPIFPERANISIAHVTSSDTIDLRTWERGAGLTRACGSAACAAAVSAARTGRTGRKVTVNVPGGPLLIEWRDDDHVMMTGPAEWEFSGTFDPATGEWSRDTQGLQGSGNADRGAA</sequence>
<gene>
    <name evidence="1" type="primary">dapF</name>
    <name type="ordered locus">BMEA_A1989</name>
</gene>
<comment type="function">
    <text evidence="1">Catalyzes the stereoinversion of LL-2,6-diaminopimelate (L,L-DAP) to meso-diaminopimelate (meso-DAP), a precursor of L-lysine and an essential component of the bacterial peptidoglycan.</text>
</comment>
<comment type="catalytic activity">
    <reaction evidence="1">
        <text>(2S,6S)-2,6-diaminopimelate = meso-2,6-diaminopimelate</text>
        <dbReference type="Rhea" id="RHEA:15393"/>
        <dbReference type="ChEBI" id="CHEBI:57609"/>
        <dbReference type="ChEBI" id="CHEBI:57791"/>
        <dbReference type="EC" id="5.1.1.7"/>
    </reaction>
</comment>
<comment type="pathway">
    <text evidence="1">Amino-acid biosynthesis; L-lysine biosynthesis via DAP pathway; DL-2,6-diaminopimelate from LL-2,6-diaminopimelate: step 1/1.</text>
</comment>
<comment type="subunit">
    <text evidence="1">Homodimer.</text>
</comment>
<comment type="subcellular location">
    <subcellularLocation>
        <location evidence="1">Cytoplasm</location>
    </subcellularLocation>
</comment>
<comment type="similarity">
    <text evidence="1">Belongs to the diaminopimelate epimerase family.</text>
</comment>
<reference key="1">
    <citation type="submission" date="2009-03" db="EMBL/GenBank/DDBJ databases">
        <title>Brucella melitensis ATCC 23457 whole genome shotgun sequencing project.</title>
        <authorList>
            <person name="Setubal J.C."/>
            <person name="Boyle S."/>
            <person name="Crasta O.R."/>
            <person name="Gillespie J.J."/>
            <person name="Kenyon R.W."/>
            <person name="Lu J."/>
            <person name="Mane S."/>
            <person name="Nagrani S."/>
            <person name="Shallom J.M."/>
            <person name="Shallom S."/>
            <person name="Shukla M."/>
            <person name="Snyder E.E."/>
            <person name="Sobral B.W."/>
            <person name="Wattam A.R."/>
            <person name="Will R."/>
            <person name="Williams K."/>
            <person name="Yoo H."/>
            <person name="Munk C."/>
            <person name="Tapia R."/>
            <person name="Han C."/>
            <person name="Detter J.C."/>
            <person name="Bruce D."/>
            <person name="Brettin T.S."/>
        </authorList>
    </citation>
    <scope>NUCLEOTIDE SEQUENCE [LARGE SCALE GENOMIC DNA]</scope>
    <source>
        <strain>ATCC 23457</strain>
    </source>
</reference>
<name>DAPF_BRUMB</name>
<dbReference type="EC" id="5.1.1.7" evidence="1"/>
<dbReference type="EMBL" id="CP001488">
    <property type="protein sequence ID" value="ACO01649.1"/>
    <property type="molecule type" value="Genomic_DNA"/>
</dbReference>
<dbReference type="RefSeq" id="WP_002966997.1">
    <property type="nucleotide sequence ID" value="NC_012441.1"/>
</dbReference>
<dbReference type="SMR" id="C0RFH7"/>
<dbReference type="GeneID" id="93017739"/>
<dbReference type="KEGG" id="bmi:BMEA_A1989"/>
<dbReference type="HOGENOM" id="CLU_053306_1_0_5"/>
<dbReference type="UniPathway" id="UPA00034">
    <property type="reaction ID" value="UER00025"/>
</dbReference>
<dbReference type="Proteomes" id="UP000001748">
    <property type="component" value="Chromosome I"/>
</dbReference>
<dbReference type="GO" id="GO:0005829">
    <property type="term" value="C:cytosol"/>
    <property type="evidence" value="ECO:0007669"/>
    <property type="project" value="TreeGrafter"/>
</dbReference>
<dbReference type="GO" id="GO:0008837">
    <property type="term" value="F:diaminopimelate epimerase activity"/>
    <property type="evidence" value="ECO:0007669"/>
    <property type="project" value="UniProtKB-UniRule"/>
</dbReference>
<dbReference type="GO" id="GO:0009089">
    <property type="term" value="P:lysine biosynthetic process via diaminopimelate"/>
    <property type="evidence" value="ECO:0007669"/>
    <property type="project" value="UniProtKB-UniRule"/>
</dbReference>
<dbReference type="Gene3D" id="3.10.310.10">
    <property type="entry name" value="Diaminopimelate Epimerase, Chain A, domain 1"/>
    <property type="match status" value="2"/>
</dbReference>
<dbReference type="HAMAP" id="MF_00197">
    <property type="entry name" value="DAP_epimerase"/>
    <property type="match status" value="1"/>
</dbReference>
<dbReference type="InterPro" id="IPR018510">
    <property type="entry name" value="DAP_epimerase_AS"/>
</dbReference>
<dbReference type="InterPro" id="IPR001653">
    <property type="entry name" value="DAP_epimerase_DapF"/>
</dbReference>
<dbReference type="NCBIfam" id="TIGR00652">
    <property type="entry name" value="DapF"/>
    <property type="match status" value="1"/>
</dbReference>
<dbReference type="PANTHER" id="PTHR31689:SF0">
    <property type="entry name" value="DIAMINOPIMELATE EPIMERASE"/>
    <property type="match status" value="1"/>
</dbReference>
<dbReference type="PANTHER" id="PTHR31689">
    <property type="entry name" value="DIAMINOPIMELATE EPIMERASE, CHLOROPLASTIC"/>
    <property type="match status" value="1"/>
</dbReference>
<dbReference type="Pfam" id="PF01678">
    <property type="entry name" value="DAP_epimerase"/>
    <property type="match status" value="2"/>
</dbReference>
<dbReference type="SUPFAM" id="SSF54506">
    <property type="entry name" value="Diaminopimelate epimerase-like"/>
    <property type="match status" value="2"/>
</dbReference>
<dbReference type="PROSITE" id="PS01326">
    <property type="entry name" value="DAP_EPIMERASE"/>
    <property type="match status" value="1"/>
</dbReference>
<keyword id="KW-0028">Amino-acid biosynthesis</keyword>
<keyword id="KW-0963">Cytoplasm</keyword>
<keyword id="KW-0413">Isomerase</keyword>
<keyword id="KW-0457">Lysine biosynthesis</keyword>
<organism>
    <name type="scientific">Brucella melitensis biotype 2 (strain ATCC 23457)</name>
    <dbReference type="NCBI Taxonomy" id="546272"/>
    <lineage>
        <taxon>Bacteria</taxon>
        <taxon>Pseudomonadati</taxon>
        <taxon>Pseudomonadota</taxon>
        <taxon>Alphaproteobacteria</taxon>
        <taxon>Hyphomicrobiales</taxon>
        <taxon>Brucellaceae</taxon>
        <taxon>Brucella/Ochrobactrum group</taxon>
        <taxon>Brucella</taxon>
    </lineage>
</organism>
<protein>
    <recommendedName>
        <fullName evidence="1">Diaminopimelate epimerase</fullName>
        <shortName evidence="1">DAP epimerase</shortName>
        <ecNumber evidence="1">5.1.1.7</ecNumber>
    </recommendedName>
    <alternativeName>
        <fullName evidence="1">PLP-independent amino acid racemase</fullName>
    </alternativeName>
</protein>
<evidence type="ECO:0000255" key="1">
    <source>
        <dbReference type="HAMAP-Rule" id="MF_00197"/>
    </source>
</evidence>
<evidence type="ECO:0000256" key="2">
    <source>
        <dbReference type="SAM" id="MobiDB-lite"/>
    </source>
</evidence>
<accession>C0RFH7</accession>
<proteinExistence type="inferred from homology"/>